<organism>
    <name type="scientific">Vibrio cholerae serotype O1 (strain ATCC 39315 / El Tor Inaba N16961)</name>
    <dbReference type="NCBI Taxonomy" id="243277"/>
    <lineage>
        <taxon>Bacteria</taxon>
        <taxon>Pseudomonadati</taxon>
        <taxon>Pseudomonadota</taxon>
        <taxon>Gammaproteobacteria</taxon>
        <taxon>Vibrionales</taxon>
        <taxon>Vibrionaceae</taxon>
        <taxon>Vibrio</taxon>
    </lineage>
</organism>
<gene>
    <name type="primary">epsN</name>
    <name type="ordered locus">VC_2723</name>
</gene>
<name>GSPN_VIBCH</name>
<comment type="function">
    <text evidence="1">Involved in a type II secretion system (T2SS, formerly general secretion pathway, GSP) for the export of proteins (By similarity). Required for secretion of cholera toxin through the outer membrane.</text>
</comment>
<comment type="subcellular location">
    <subcellularLocation>
        <location evidence="3">Cell inner membrane</location>
    </subcellularLocation>
</comment>
<comment type="similarity">
    <text evidence="3">Belongs to the GSP N family.</text>
</comment>
<sequence>MKRAVGYGLLFSTVLMTSVVVHLPAQVALSPLPLPEGLELTGIEGTLWQGQAAQVRWQGMSLGDLNWDLHLSALLLGQLEADIRFGRGSSTQLRGKGVVGVGLSGPYADDFLLSLPAAQAITWLPLPVPLMAQGQLEMAVKQYRFGEPYCQQAEGSLAWSAAQLESPIGALQLGTVVSDFTCQESVVTLKGGQKTAQVSSEFNLSLQPDNRYQAQAWFKPEAEFPESLKEQLSWLPQPDGQGRYPFNQQGQL</sequence>
<evidence type="ECO:0000250" key="1"/>
<evidence type="ECO:0000255" key="2"/>
<evidence type="ECO:0000305" key="3"/>
<protein>
    <recommendedName>
        <fullName>Type II secretion system protein N</fullName>
        <shortName>T2SS protein N</shortName>
    </recommendedName>
    <alternativeName>
        <fullName>Cholera toxin secretion protein EpsN</fullName>
    </alternativeName>
    <alternativeName>
        <fullName>General secretion pathway protein N</fullName>
    </alternativeName>
</protein>
<proteinExistence type="inferred from homology"/>
<accession>P45784</accession>
<accession>Q9KNK9</accession>
<reference key="1">
    <citation type="thesis" date="1994" institute="Michigan State University" country="United States">
        <title>Organization of the general secretion pathway genes in Vibrio cholerae.</title>
        <authorList>
            <person name="Overbye L.J."/>
        </authorList>
    </citation>
    <scope>NUCLEOTIDE SEQUENCE [GENOMIC DNA]</scope>
    <source>
        <strain>El Tor TRH7000</strain>
    </source>
</reference>
<reference key="2">
    <citation type="journal article" date="2000" name="Nature">
        <title>DNA sequence of both chromosomes of the cholera pathogen Vibrio cholerae.</title>
        <authorList>
            <person name="Heidelberg J.F."/>
            <person name="Eisen J.A."/>
            <person name="Nelson W.C."/>
            <person name="Clayton R.A."/>
            <person name="Gwinn M.L."/>
            <person name="Dodson R.J."/>
            <person name="Haft D.H."/>
            <person name="Hickey E.K."/>
            <person name="Peterson J.D."/>
            <person name="Umayam L.A."/>
            <person name="Gill S.R."/>
            <person name="Nelson K.E."/>
            <person name="Read T.D."/>
            <person name="Tettelin H."/>
            <person name="Richardson D.L."/>
            <person name="Ermolaeva M.D."/>
            <person name="Vamathevan J.J."/>
            <person name="Bass S."/>
            <person name="Qin H."/>
            <person name="Dragoi I."/>
            <person name="Sellers P."/>
            <person name="McDonald L.A."/>
            <person name="Utterback T.R."/>
            <person name="Fleischmann R.D."/>
            <person name="Nierman W.C."/>
            <person name="White O."/>
            <person name="Salzberg S.L."/>
            <person name="Smith H.O."/>
            <person name="Colwell R.R."/>
            <person name="Mekalanos J.J."/>
            <person name="Venter J.C."/>
            <person name="Fraser C.M."/>
        </authorList>
    </citation>
    <scope>NUCLEOTIDE SEQUENCE [LARGE SCALE GENOMIC DNA]</scope>
    <source>
        <strain>ATCC 39315 / El Tor Inaba N16961</strain>
    </source>
</reference>
<dbReference type="EMBL" id="L33796">
    <property type="protein sequence ID" value="AAA58795.1"/>
    <property type="molecule type" value="Genomic_DNA"/>
</dbReference>
<dbReference type="EMBL" id="AE003852">
    <property type="protein sequence ID" value="AAF95863.1"/>
    <property type="molecule type" value="Genomic_DNA"/>
</dbReference>
<dbReference type="PIR" id="E82040">
    <property type="entry name" value="E82040"/>
</dbReference>
<dbReference type="PIR" id="PN0647">
    <property type="entry name" value="PN0647"/>
</dbReference>
<dbReference type="RefSeq" id="NP_232350.1">
    <property type="nucleotide sequence ID" value="NC_002505.1"/>
</dbReference>
<dbReference type="RefSeq" id="WP_000817146.1">
    <property type="nucleotide sequence ID" value="NZ_LT906614.1"/>
</dbReference>
<dbReference type="STRING" id="243277.VC_2723"/>
<dbReference type="DNASU" id="2615551"/>
<dbReference type="EnsemblBacteria" id="AAF95863">
    <property type="protein sequence ID" value="AAF95863"/>
    <property type="gene ID" value="VC_2723"/>
</dbReference>
<dbReference type="KEGG" id="vch:VC_2723"/>
<dbReference type="PATRIC" id="fig|243277.26.peg.2598"/>
<dbReference type="eggNOG" id="ENOG5032RTB">
    <property type="taxonomic scope" value="Bacteria"/>
</dbReference>
<dbReference type="HOGENOM" id="CLU_092754_1_0_6"/>
<dbReference type="Proteomes" id="UP000000584">
    <property type="component" value="Chromosome 1"/>
</dbReference>
<dbReference type="GO" id="GO:0005886">
    <property type="term" value="C:plasma membrane"/>
    <property type="evidence" value="ECO:0007669"/>
    <property type="project" value="UniProtKB-SubCell"/>
</dbReference>
<dbReference type="GO" id="GO:0015627">
    <property type="term" value="C:type II protein secretion system complex"/>
    <property type="evidence" value="ECO:0007669"/>
    <property type="project" value="InterPro"/>
</dbReference>
<dbReference type="GO" id="GO:0015628">
    <property type="term" value="P:protein secretion by the type II secretion system"/>
    <property type="evidence" value="ECO:0007669"/>
    <property type="project" value="InterPro"/>
</dbReference>
<dbReference type="InterPro" id="IPR000645">
    <property type="entry name" value="T2SS_GspN_CS"/>
</dbReference>
<dbReference type="InterPro" id="IPR022792">
    <property type="entry name" value="T2SS_protein-GspN"/>
</dbReference>
<dbReference type="Pfam" id="PF01203">
    <property type="entry name" value="T2SSN"/>
    <property type="match status" value="1"/>
</dbReference>
<dbReference type="PROSITE" id="PS01142">
    <property type="entry name" value="T2SP_N"/>
    <property type="match status" value="1"/>
</dbReference>
<feature type="chain" id="PRO_0000195056" description="Type II secretion system protein N">
    <location>
        <begin position="1"/>
        <end position="252"/>
    </location>
</feature>
<feature type="topological domain" description="Cytoplasmic" evidence="2">
    <location>
        <begin position="1"/>
        <end position="4"/>
    </location>
</feature>
<feature type="transmembrane region" description="Helical" evidence="2">
    <location>
        <begin position="5"/>
        <end position="25"/>
    </location>
</feature>
<feature type="topological domain" description="Periplasmic" evidence="2">
    <location>
        <begin position="26"/>
        <end position="252"/>
    </location>
</feature>
<feature type="sequence conflict" description="In Ref. 1; AAA58795." evidence="3" ref="1">
    <original>GSLAWSAAQL</original>
    <variation>ELSLVSRAV</variation>
    <location>
        <begin position="155"/>
        <end position="164"/>
    </location>
</feature>
<keyword id="KW-0997">Cell inner membrane</keyword>
<keyword id="KW-1003">Cell membrane</keyword>
<keyword id="KW-0472">Membrane</keyword>
<keyword id="KW-0653">Protein transport</keyword>
<keyword id="KW-1185">Reference proteome</keyword>
<keyword id="KW-0812">Transmembrane</keyword>
<keyword id="KW-1133">Transmembrane helix</keyword>
<keyword id="KW-0813">Transport</keyword>